<feature type="signal peptide" evidence="1">
    <location>
        <begin position="1"/>
        <end position="17"/>
    </location>
</feature>
<feature type="chain" id="PRO_0000023924" description="Peptidoglycan recognition protein 4">
    <location>
        <begin position="18"/>
        <end position="373"/>
    </location>
</feature>
<feature type="domain" description="N-acetylmuramoyl-L-alanine amidase 1" evidence="1">
    <location>
        <begin position="74"/>
        <end position="212"/>
    </location>
</feature>
<feature type="domain" description="N-acetylmuramoyl-L-alanine amidase 2" evidence="1">
    <location>
        <begin position="235"/>
        <end position="358"/>
    </location>
</feature>
<feature type="region of interest" description="Interaction with murein">
    <location>
        <begin position="293"/>
        <end position="302"/>
    </location>
</feature>
<feature type="region of interest" description="Interaction with murein">
    <location>
        <begin position="353"/>
        <end position="354"/>
    </location>
</feature>
<feature type="binding site">
    <location>
        <position position="263"/>
    </location>
    <ligand>
        <name>peptidoglycan</name>
        <dbReference type="ChEBI" id="CHEBI:8005"/>
    </ligand>
</feature>
<feature type="binding site">
    <location>
        <position position="274"/>
    </location>
    <ligand>
        <name>peptidoglycan</name>
        <dbReference type="ChEBI" id="CHEBI:8005"/>
    </ligand>
</feature>
<feature type="glycosylation site" description="N-linked (GlcNAc...) asparagine" evidence="1">
    <location>
        <position position="22"/>
    </location>
</feature>
<feature type="glycosylation site" description="N-linked (GlcNAc...) asparagine" evidence="1">
    <location>
        <position position="39"/>
    </location>
</feature>
<feature type="glycosylation site" description="N-linked (GlcNAc...) asparagine" evidence="1">
    <location>
        <position position="109"/>
    </location>
</feature>
<feature type="glycosylation site" description="N-linked (GlcNAc...) asparagine" evidence="1">
    <location>
        <position position="145"/>
    </location>
</feature>
<feature type="glycosylation site" description="N-linked (GlcNAc...) asparagine" evidence="1">
    <location>
        <position position="247"/>
    </location>
</feature>
<feature type="disulfide bond" evidence="6">
    <location>
        <begin position="210"/>
        <end position="332"/>
    </location>
</feature>
<feature type="disulfide bond" evidence="6">
    <location>
        <begin position="226"/>
        <end position="270"/>
    </location>
</feature>
<feature type="disulfide bond" evidence="6">
    <location>
        <begin position="246"/>
        <end position="252"/>
    </location>
</feature>
<feature type="splice variant" id="VSP_024388" description="In isoform 2." evidence="8">
    <location>
        <begin position="47"/>
        <end position="50"/>
    </location>
</feature>
<feature type="sequence variant" id="VAR_050503" description="In dbSNP:rs12096209." evidence="4 7">
    <original>P</original>
    <variation>L</variation>
    <location>
        <position position="3"/>
    </location>
</feature>
<feature type="sequence variant" id="VAR_033283" description="In dbSNP:rs3006458." evidence="2 3 4">
    <original>I</original>
    <variation>L</variation>
    <location>
        <position position="13"/>
    </location>
</feature>
<feature type="sequence variant" id="VAR_031586" description="In dbSNP:rs3006453.">
    <original>Q</original>
    <variation>R</variation>
    <location>
        <position position="92"/>
    </location>
</feature>
<feature type="sequence variant" id="VAR_031587" description="In dbSNP:rs3006448." evidence="2 3 4">
    <original>G</original>
    <variation>V</variation>
    <location>
        <position position="192"/>
    </location>
</feature>
<feature type="sequence variant" id="VAR_031588" description="In dbSNP:rs12063091." evidence="4 7">
    <original>V</original>
    <variation>I</variation>
    <location>
        <position position="213"/>
    </location>
</feature>
<feature type="sequence variant" id="VAR_031589" description="In dbSNP:rs35347202.">
    <original>D</original>
    <variation>N</variation>
    <location>
        <position position="301"/>
    </location>
</feature>
<feature type="strand" evidence="10">
    <location>
        <begin position="212"/>
        <end position="214"/>
    </location>
</feature>
<feature type="helix" evidence="10">
    <location>
        <begin position="216"/>
        <end position="219"/>
    </location>
</feature>
<feature type="strand" evidence="10">
    <location>
        <begin position="231"/>
        <end position="240"/>
    </location>
</feature>
<feature type="helix" evidence="10">
    <location>
        <begin position="249"/>
        <end position="265"/>
    </location>
</feature>
<feature type="strand" evidence="10">
    <location>
        <begin position="275"/>
        <end position="278"/>
    </location>
</feature>
<feature type="strand" evidence="10">
    <location>
        <begin position="284"/>
        <end position="288"/>
    </location>
</feature>
<feature type="strand" evidence="10">
    <location>
        <begin position="290"/>
        <end position="292"/>
    </location>
</feature>
<feature type="turn" evidence="10">
    <location>
        <begin position="298"/>
        <end position="300"/>
    </location>
</feature>
<feature type="helix" evidence="10">
    <location>
        <begin position="301"/>
        <end position="303"/>
    </location>
</feature>
<feature type="strand" evidence="10">
    <location>
        <begin position="304"/>
        <end position="311"/>
    </location>
</feature>
<feature type="strand" evidence="10">
    <location>
        <begin position="314"/>
        <end position="316"/>
    </location>
</feature>
<feature type="helix" evidence="10">
    <location>
        <begin position="320"/>
        <end position="335"/>
    </location>
</feature>
<feature type="strand" evidence="10">
    <location>
        <begin position="338"/>
        <end position="347"/>
    </location>
</feature>
<feature type="helix" evidence="10">
    <location>
        <begin position="348"/>
        <end position="351"/>
    </location>
</feature>
<feature type="strand" evidence="10">
    <location>
        <begin position="352"/>
        <end position="354"/>
    </location>
</feature>
<feature type="helix" evidence="10">
    <location>
        <begin position="359"/>
        <end position="365"/>
    </location>
</feature>
<organism>
    <name type="scientific">Homo sapiens</name>
    <name type="common">Human</name>
    <dbReference type="NCBI Taxonomy" id="9606"/>
    <lineage>
        <taxon>Eukaryota</taxon>
        <taxon>Metazoa</taxon>
        <taxon>Chordata</taxon>
        <taxon>Craniata</taxon>
        <taxon>Vertebrata</taxon>
        <taxon>Euteleostomi</taxon>
        <taxon>Mammalia</taxon>
        <taxon>Eutheria</taxon>
        <taxon>Euarchontoglires</taxon>
        <taxon>Primates</taxon>
        <taxon>Haplorrhini</taxon>
        <taxon>Catarrhini</taxon>
        <taxon>Hominidae</taxon>
        <taxon>Homo</taxon>
    </lineage>
</organism>
<keyword id="KW-0002">3D-structure</keyword>
<keyword id="KW-0025">Alternative splicing</keyword>
<keyword id="KW-0044">Antibiotic</keyword>
<keyword id="KW-0929">Antimicrobial</keyword>
<keyword id="KW-1015">Disulfide bond</keyword>
<keyword id="KW-0325">Glycoprotein</keyword>
<keyword id="KW-0391">Immunity</keyword>
<keyword id="KW-0399">Innate immunity</keyword>
<keyword id="KW-1267">Proteomics identification</keyword>
<keyword id="KW-1185">Reference proteome</keyword>
<keyword id="KW-0677">Repeat</keyword>
<keyword id="KW-0964">Secreted</keyword>
<keyword id="KW-0732">Signal</keyword>
<dbReference type="EMBL" id="AY035377">
    <property type="protein sequence ID" value="AAK72485.1"/>
    <property type="molecule type" value="mRNA"/>
</dbReference>
<dbReference type="EMBL" id="AF242518">
    <property type="protein sequence ID" value="AAF99599.1"/>
    <property type="status" value="ALT_FRAME"/>
    <property type="molecule type" value="mRNA"/>
</dbReference>
<dbReference type="EMBL" id="AK292203">
    <property type="protein sequence ID" value="BAF84892.1"/>
    <property type="molecule type" value="mRNA"/>
</dbReference>
<dbReference type="EMBL" id="AL591704">
    <property type="status" value="NOT_ANNOTATED_CDS"/>
    <property type="molecule type" value="Genomic_DNA"/>
</dbReference>
<dbReference type="EMBL" id="BC142636">
    <property type="protein sequence ID" value="AAI42637.1"/>
    <property type="molecule type" value="mRNA"/>
</dbReference>
<dbReference type="EMBL" id="BC107157">
    <property type="protein sequence ID" value="AAI07158.1"/>
    <property type="molecule type" value="mRNA"/>
</dbReference>
<dbReference type="EMBL" id="BC107158">
    <property type="protein sequence ID" value="AAI07159.1"/>
    <property type="molecule type" value="mRNA"/>
</dbReference>
<dbReference type="CCDS" id="CCDS30871.1">
    <molecule id="Q96LB8-1"/>
</dbReference>
<dbReference type="RefSeq" id="NP_065126.2">
    <molecule id="Q96LB8-1"/>
    <property type="nucleotide sequence ID" value="NM_020393.4"/>
</dbReference>
<dbReference type="RefSeq" id="XP_011508091.1">
    <molecule id="Q96LB8-1"/>
    <property type="nucleotide sequence ID" value="XM_011509789.3"/>
</dbReference>
<dbReference type="RefSeq" id="XP_011508092.1">
    <molecule id="Q96LB8-1"/>
    <property type="nucleotide sequence ID" value="XM_011509790.1"/>
</dbReference>
<dbReference type="RefSeq" id="XP_011508093.1">
    <molecule id="Q96LB8-2"/>
    <property type="nucleotide sequence ID" value="XM_011509791.3"/>
</dbReference>
<dbReference type="PDB" id="2EAV">
    <property type="method" value="X-ray"/>
    <property type="resolution" value="2.20 A"/>
    <property type="chains" value="A/B=209-373"/>
</dbReference>
<dbReference type="PDB" id="2EAX">
    <property type="method" value="X-ray"/>
    <property type="resolution" value="2.10 A"/>
    <property type="chains" value="A/B/C=209-373"/>
</dbReference>
<dbReference type="PDBsum" id="2EAV"/>
<dbReference type="PDBsum" id="2EAX"/>
<dbReference type="SMR" id="Q96LB8"/>
<dbReference type="BioGRID" id="121379">
    <property type="interactions" value="1"/>
</dbReference>
<dbReference type="FunCoup" id="Q96LB8">
    <property type="interactions" value="1"/>
</dbReference>
<dbReference type="STRING" id="9606.ENSP00000352672"/>
<dbReference type="GlyCosmos" id="Q96LB8">
    <property type="glycosylation" value="5 sites, No reported glycans"/>
</dbReference>
<dbReference type="GlyGen" id="Q96LB8">
    <property type="glycosylation" value="5 sites"/>
</dbReference>
<dbReference type="iPTMnet" id="Q96LB8"/>
<dbReference type="PhosphoSitePlus" id="Q96LB8"/>
<dbReference type="BioMuta" id="PGLYRP4"/>
<dbReference type="DMDM" id="143811439"/>
<dbReference type="MassIVE" id="Q96LB8"/>
<dbReference type="PaxDb" id="9606-ENSP00000352672"/>
<dbReference type="PeptideAtlas" id="Q96LB8"/>
<dbReference type="Antibodypedia" id="34122">
    <property type="antibodies" value="177 antibodies from 25 providers"/>
</dbReference>
<dbReference type="DNASU" id="57115"/>
<dbReference type="Ensembl" id="ENST00000359650.10">
    <molecule id="Q96LB8-1"/>
    <property type="protein sequence ID" value="ENSP00000352672.5"/>
    <property type="gene ID" value="ENSG00000163218.15"/>
</dbReference>
<dbReference type="Ensembl" id="ENST00000368739.3">
    <molecule id="Q96LB8-2"/>
    <property type="protein sequence ID" value="ENSP00000357728.3"/>
    <property type="gene ID" value="ENSG00000163218.15"/>
</dbReference>
<dbReference type="GeneID" id="57115"/>
<dbReference type="KEGG" id="hsa:57115"/>
<dbReference type="MANE-Select" id="ENST00000359650.10">
    <property type="protein sequence ID" value="ENSP00000352672.5"/>
    <property type="RefSeq nucleotide sequence ID" value="NM_020393.4"/>
    <property type="RefSeq protein sequence ID" value="NP_065126.2"/>
</dbReference>
<dbReference type="UCSC" id="uc001fbo.4">
    <molecule id="Q96LB8-1"/>
    <property type="organism name" value="human"/>
</dbReference>
<dbReference type="AGR" id="HGNC:30015"/>
<dbReference type="CTD" id="57115"/>
<dbReference type="DisGeNET" id="57115"/>
<dbReference type="GeneCards" id="PGLYRP4"/>
<dbReference type="HGNC" id="HGNC:30015">
    <property type="gene designation" value="PGLYRP4"/>
</dbReference>
<dbReference type="HPA" id="ENSG00000163218">
    <property type="expression patterns" value="Group enriched (cervix, esophagus, skin, vagina)"/>
</dbReference>
<dbReference type="MIM" id="608198">
    <property type="type" value="gene"/>
</dbReference>
<dbReference type="neXtProt" id="NX_Q96LB8"/>
<dbReference type="OpenTargets" id="ENSG00000163218"/>
<dbReference type="PharmGKB" id="PA134902492"/>
<dbReference type="VEuPathDB" id="HostDB:ENSG00000163218"/>
<dbReference type="eggNOG" id="ENOG502S2KY">
    <property type="taxonomic scope" value="Eukaryota"/>
</dbReference>
<dbReference type="GeneTree" id="ENSGT00940000162349"/>
<dbReference type="HOGENOM" id="CLU_037559_1_0_1"/>
<dbReference type="InParanoid" id="Q96LB8"/>
<dbReference type="OMA" id="AREAHCP"/>
<dbReference type="OrthoDB" id="10001926at2759"/>
<dbReference type="PAN-GO" id="Q96LB8">
    <property type="GO annotations" value="0 GO annotations based on evolutionary models"/>
</dbReference>
<dbReference type="PhylomeDB" id="Q96LB8"/>
<dbReference type="TreeFam" id="TF323898"/>
<dbReference type="PathwayCommons" id="Q96LB8"/>
<dbReference type="Reactome" id="R-HSA-6803157">
    <property type="pathway name" value="Antimicrobial peptides"/>
</dbReference>
<dbReference type="SignaLink" id="Q96LB8"/>
<dbReference type="BioGRID-ORCS" id="57115">
    <property type="hits" value="10 hits in 1145 CRISPR screens"/>
</dbReference>
<dbReference type="ChiTaRS" id="PGLYRP4">
    <property type="organism name" value="human"/>
</dbReference>
<dbReference type="EvolutionaryTrace" id="Q96LB8"/>
<dbReference type="GenomeRNAi" id="57115"/>
<dbReference type="Pharos" id="Q96LB8">
    <property type="development level" value="Tbio"/>
</dbReference>
<dbReference type="PRO" id="PR:Q96LB8"/>
<dbReference type="Proteomes" id="UP000005640">
    <property type="component" value="Chromosome 1"/>
</dbReference>
<dbReference type="RNAct" id="Q96LB8">
    <property type="molecule type" value="protein"/>
</dbReference>
<dbReference type="Bgee" id="ENSG00000163218">
    <property type="expression patterns" value="Expressed in lower esophagus mucosa and 64 other cell types or tissues"/>
</dbReference>
<dbReference type="GO" id="GO:0005576">
    <property type="term" value="C:extracellular region"/>
    <property type="evidence" value="ECO:0007669"/>
    <property type="project" value="UniProtKB-SubCell"/>
</dbReference>
<dbReference type="GO" id="GO:0016020">
    <property type="term" value="C:membrane"/>
    <property type="evidence" value="ECO:0000303"/>
    <property type="project" value="UniProtKB"/>
</dbReference>
<dbReference type="GO" id="GO:0032991">
    <property type="term" value="C:protein-containing complex"/>
    <property type="evidence" value="ECO:0000314"/>
    <property type="project" value="UniProtKB"/>
</dbReference>
<dbReference type="GO" id="GO:0008745">
    <property type="term" value="F:N-acetylmuramoyl-L-alanine amidase activity"/>
    <property type="evidence" value="ECO:0007669"/>
    <property type="project" value="InterPro"/>
</dbReference>
<dbReference type="GO" id="GO:0042834">
    <property type="term" value="F:peptidoglycan binding"/>
    <property type="evidence" value="ECO:0000314"/>
    <property type="project" value="UniProtKB"/>
</dbReference>
<dbReference type="GO" id="GO:0016019">
    <property type="term" value="F:peptidoglycan immune receptor activity"/>
    <property type="evidence" value="ECO:0000314"/>
    <property type="project" value="UniProtKB"/>
</dbReference>
<dbReference type="GO" id="GO:0046982">
    <property type="term" value="F:protein heterodimerization activity"/>
    <property type="evidence" value="ECO:0000353"/>
    <property type="project" value="UniProtKB"/>
</dbReference>
<dbReference type="GO" id="GO:0008270">
    <property type="term" value="F:zinc ion binding"/>
    <property type="evidence" value="ECO:0007669"/>
    <property type="project" value="InterPro"/>
</dbReference>
<dbReference type="GO" id="GO:0061844">
    <property type="term" value="P:antimicrobial humoral immune response mediated by antimicrobial peptide"/>
    <property type="evidence" value="ECO:0000314"/>
    <property type="project" value="UniProtKB"/>
</dbReference>
<dbReference type="GO" id="GO:0042742">
    <property type="term" value="P:defense response to bacterium"/>
    <property type="evidence" value="ECO:0000318"/>
    <property type="project" value="GO_Central"/>
</dbReference>
<dbReference type="GO" id="GO:0050830">
    <property type="term" value="P:defense response to Gram-positive bacterium"/>
    <property type="evidence" value="ECO:0000314"/>
    <property type="project" value="UniProtKB"/>
</dbReference>
<dbReference type="GO" id="GO:0016045">
    <property type="term" value="P:detection of bacterium"/>
    <property type="evidence" value="ECO:0000314"/>
    <property type="project" value="UniProtKB"/>
</dbReference>
<dbReference type="GO" id="GO:0006955">
    <property type="term" value="P:immune response"/>
    <property type="evidence" value="ECO:0000318"/>
    <property type="project" value="GO_Central"/>
</dbReference>
<dbReference type="GO" id="GO:0045087">
    <property type="term" value="P:innate immune response"/>
    <property type="evidence" value="ECO:0000303"/>
    <property type="project" value="UniProtKB"/>
</dbReference>
<dbReference type="GO" id="GO:0031640">
    <property type="term" value="P:killing of cells of another organism"/>
    <property type="evidence" value="ECO:0000314"/>
    <property type="project" value="UniProtKB"/>
</dbReference>
<dbReference type="GO" id="GO:0009253">
    <property type="term" value="P:peptidoglycan catabolic process"/>
    <property type="evidence" value="ECO:0007669"/>
    <property type="project" value="InterPro"/>
</dbReference>
<dbReference type="CDD" id="cd06583">
    <property type="entry name" value="PGRP"/>
    <property type="match status" value="2"/>
</dbReference>
<dbReference type="FunFam" id="3.40.80.10:FF:000001">
    <property type="entry name" value="Peptidoglycan recognition protein 1"/>
    <property type="match status" value="1"/>
</dbReference>
<dbReference type="FunFam" id="3.40.80.10:FF:000004">
    <property type="entry name" value="Peptidoglycan recognition protein 4"/>
    <property type="match status" value="1"/>
</dbReference>
<dbReference type="Gene3D" id="3.40.80.10">
    <property type="entry name" value="Peptidoglycan recognition protein-like"/>
    <property type="match status" value="2"/>
</dbReference>
<dbReference type="InterPro" id="IPR036505">
    <property type="entry name" value="Amidase/PGRP_sf"/>
</dbReference>
<dbReference type="InterPro" id="IPR002502">
    <property type="entry name" value="Amidase_domain"/>
</dbReference>
<dbReference type="InterPro" id="IPR015510">
    <property type="entry name" value="PGRP"/>
</dbReference>
<dbReference type="InterPro" id="IPR006619">
    <property type="entry name" value="PGRP_domain_met/bac"/>
</dbReference>
<dbReference type="PANTHER" id="PTHR11022">
    <property type="entry name" value="PEPTIDOGLYCAN RECOGNITION PROTEIN"/>
    <property type="match status" value="1"/>
</dbReference>
<dbReference type="PANTHER" id="PTHR11022:SF12">
    <property type="entry name" value="PEPTIDOGLYCAN RECOGNITION PROTEIN 3"/>
    <property type="match status" value="1"/>
</dbReference>
<dbReference type="Pfam" id="PF01510">
    <property type="entry name" value="Amidase_2"/>
    <property type="match status" value="2"/>
</dbReference>
<dbReference type="SMART" id="SM00644">
    <property type="entry name" value="Ami_2"/>
    <property type="match status" value="2"/>
</dbReference>
<dbReference type="SMART" id="SM00701">
    <property type="entry name" value="PGRP"/>
    <property type="match status" value="2"/>
</dbReference>
<dbReference type="SUPFAM" id="SSF55846">
    <property type="entry name" value="N-acetylmuramoyl-L-alanine amidase-like"/>
    <property type="match status" value="2"/>
</dbReference>
<name>PGRP4_HUMAN</name>
<gene>
    <name type="primary">PGLYRP4</name>
    <name type="synonym">PGRPIB</name>
    <name type="ORF">SBBI67</name>
</gene>
<protein>
    <recommendedName>
        <fullName>Peptidoglycan recognition protein 4</fullName>
    </recommendedName>
    <alternativeName>
        <fullName>Peptidoglycan recognition protein I-beta</fullName>
        <shortName>PGLYRPIbeta</shortName>
        <shortName>PGRP-I-beta</shortName>
    </alternativeName>
    <alternativeName>
        <fullName>Peptidoglycan recognition protein intermediate beta</fullName>
    </alternativeName>
</protein>
<comment type="function">
    <text evidence="5">Pattern receptor that binds to murein peptidoglycans (PGN) of Gram-positive bacteria. Has bactericidal activity towards Gram-positive bacteria. May kill Gram-positive bacteria by interfering with peptidoglycan biosynthesis. Also binds to Gram-negative bacteria, and has bacteriostatic activity towards Gram-negative bacteria. Plays a role in innate immunity.</text>
</comment>
<comment type="subunit">
    <text evidence="5 6">Homodimer; disulfide-linked. Heterodimer with PGLYRP3; disulfide-linked.</text>
</comment>
<comment type="subcellular location">
    <subcellularLocation>
        <location evidence="5">Secreted</location>
    </subcellularLocation>
</comment>
<comment type="alternative products">
    <event type="alternative splicing"/>
    <isoform>
        <id>Q96LB8-1</id>
        <name>1</name>
        <sequence type="displayed"/>
    </isoform>
    <isoform>
        <id>Q96LB8-2</id>
        <name>2</name>
        <sequence type="described" ref="VSP_024388"/>
    </isoform>
</comment>
<comment type="tissue specificity">
    <text evidence="2 5">Detected in skin epidermis, eccrine sweat glands and ducts, mucous cells in the submandibular salivary gland, mucous cells in the throat, ciliary body epithelial cells of the eye, small intestine, colon, stomach and in mature epithelial cells of the tongue (at protein level). High expression in skin and esophagus. Expressed also to a much lesser extent in the tonsils and thymus.</text>
</comment>
<comment type="induction">
    <text evidence="5">Up-regulated by exposure to Gram-positive and Gram-negative bacteria.</text>
</comment>
<comment type="PTM">
    <text evidence="5">N-glycosylated.</text>
</comment>
<comment type="similarity">
    <text evidence="9">Belongs to the N-acetylmuramoyl-L-alanine amidase 2 family.</text>
</comment>
<comment type="sequence caution" evidence="9">
    <conflict type="frameshift">
        <sequence resource="EMBL-CDS" id="AAF99599"/>
    </conflict>
</comment>
<sequence length="373" mass="40620">MLPWLLVFSALGIQAWGDSSWNKTQAKQVSEGLQYLFENISQLTEKGLPTDVSTTVSRKAWGAEAVGCSIQLTTPVNVLVIHHVPGLECHDQTVCSQRLRELQAHHVHNNSGCDVAYNFLVGDDGRVYEGVGWNIQGVHTQGYNNISLGFAFFGTKKGHSPSPAALSAMENLITYAVQKGHLSSSYVQPLLGKGENCLAPRQKTSLKKACPGVVPRSVWGARETHCPRMTLPAKYGIIIHTAGRTCNISDECRLLVRDIQSFYIDRLKSCDIGYNFLVGQDGAIYEGVGWNVQGSSTPGYDDIALGITFMGTFTGIPPNAAALEAAQDLIQCAMVKGYLTPNYLLVGHSDVARTLSPGQALYNIISTWPHFKH</sequence>
<accession>Q96LB8</accession>
<accession>A8K838</accession>
<accession>Q3B822</accession>
<accession>Q3B823</accession>
<accession>Q5SY63</accession>
<accession>Q5SY64</accession>
<accession>Q9HD75</accession>
<reference key="1">
    <citation type="journal article" date="2001" name="J. Biol. Chem.">
        <title>Peptidoglycan recognition proteins: a novel family of four human innate immunity pattern recognition molecules.</title>
        <authorList>
            <person name="Liu C."/>
            <person name="Xu Z."/>
            <person name="Gupta D."/>
            <person name="Dziarski R."/>
        </authorList>
    </citation>
    <scope>NUCLEOTIDE SEQUENCE [MRNA] (ISOFORM 1)</scope>
    <scope>TISSUE SPECIFICITY</scope>
    <scope>VARIANTS LEU-13 AND VAL-192</scope>
</reference>
<reference key="2">
    <citation type="submission" date="2000-03" db="EMBL/GenBank/DDBJ databases">
        <authorList>
            <person name="Zhang W."/>
            <person name="Wan T."/>
            <person name="Cao X."/>
        </authorList>
    </citation>
    <scope>NUCLEOTIDE SEQUENCE [MRNA] (ISOFORM 2)</scope>
    <scope>VARIANTS LEU-3 AND ILE-213</scope>
</reference>
<reference key="3">
    <citation type="journal article" date="2004" name="Nat. Genet.">
        <title>Complete sequencing and characterization of 21,243 full-length human cDNAs.</title>
        <authorList>
            <person name="Ota T."/>
            <person name="Suzuki Y."/>
            <person name="Nishikawa T."/>
            <person name="Otsuki T."/>
            <person name="Sugiyama T."/>
            <person name="Irie R."/>
            <person name="Wakamatsu A."/>
            <person name="Hayashi K."/>
            <person name="Sato H."/>
            <person name="Nagai K."/>
            <person name="Kimura K."/>
            <person name="Makita H."/>
            <person name="Sekine M."/>
            <person name="Obayashi M."/>
            <person name="Nishi T."/>
            <person name="Shibahara T."/>
            <person name="Tanaka T."/>
            <person name="Ishii S."/>
            <person name="Yamamoto J."/>
            <person name="Saito K."/>
            <person name="Kawai Y."/>
            <person name="Isono Y."/>
            <person name="Nakamura Y."/>
            <person name="Nagahari K."/>
            <person name="Murakami K."/>
            <person name="Yasuda T."/>
            <person name="Iwayanagi T."/>
            <person name="Wagatsuma M."/>
            <person name="Shiratori A."/>
            <person name="Sudo H."/>
            <person name="Hosoiri T."/>
            <person name="Kaku Y."/>
            <person name="Kodaira H."/>
            <person name="Kondo H."/>
            <person name="Sugawara M."/>
            <person name="Takahashi M."/>
            <person name="Kanda K."/>
            <person name="Yokoi T."/>
            <person name="Furuya T."/>
            <person name="Kikkawa E."/>
            <person name="Omura Y."/>
            <person name="Abe K."/>
            <person name="Kamihara K."/>
            <person name="Katsuta N."/>
            <person name="Sato K."/>
            <person name="Tanikawa M."/>
            <person name="Yamazaki M."/>
            <person name="Ninomiya K."/>
            <person name="Ishibashi T."/>
            <person name="Yamashita H."/>
            <person name="Murakawa K."/>
            <person name="Fujimori K."/>
            <person name="Tanai H."/>
            <person name="Kimata M."/>
            <person name="Watanabe M."/>
            <person name="Hiraoka S."/>
            <person name="Chiba Y."/>
            <person name="Ishida S."/>
            <person name="Ono Y."/>
            <person name="Takiguchi S."/>
            <person name="Watanabe S."/>
            <person name="Yosida M."/>
            <person name="Hotuta T."/>
            <person name="Kusano J."/>
            <person name="Kanehori K."/>
            <person name="Takahashi-Fujii A."/>
            <person name="Hara H."/>
            <person name="Tanase T.-O."/>
            <person name="Nomura Y."/>
            <person name="Togiya S."/>
            <person name="Komai F."/>
            <person name="Hara R."/>
            <person name="Takeuchi K."/>
            <person name="Arita M."/>
            <person name="Imose N."/>
            <person name="Musashino K."/>
            <person name="Yuuki H."/>
            <person name="Oshima A."/>
            <person name="Sasaki N."/>
            <person name="Aotsuka S."/>
            <person name="Yoshikawa Y."/>
            <person name="Matsunawa H."/>
            <person name="Ichihara T."/>
            <person name="Shiohata N."/>
            <person name="Sano S."/>
            <person name="Moriya S."/>
            <person name="Momiyama H."/>
            <person name="Satoh N."/>
            <person name="Takami S."/>
            <person name="Terashima Y."/>
            <person name="Suzuki O."/>
            <person name="Nakagawa S."/>
            <person name="Senoh A."/>
            <person name="Mizoguchi H."/>
            <person name="Goto Y."/>
            <person name="Shimizu F."/>
            <person name="Wakebe H."/>
            <person name="Hishigaki H."/>
            <person name="Watanabe T."/>
            <person name="Sugiyama A."/>
            <person name="Takemoto M."/>
            <person name="Kawakami B."/>
            <person name="Yamazaki M."/>
            <person name="Watanabe K."/>
            <person name="Kumagai A."/>
            <person name="Itakura S."/>
            <person name="Fukuzumi Y."/>
            <person name="Fujimori Y."/>
            <person name="Komiyama M."/>
            <person name="Tashiro H."/>
            <person name="Tanigami A."/>
            <person name="Fujiwara T."/>
            <person name="Ono T."/>
            <person name="Yamada K."/>
            <person name="Fujii Y."/>
            <person name="Ozaki K."/>
            <person name="Hirao M."/>
            <person name="Ohmori Y."/>
            <person name="Kawabata A."/>
            <person name="Hikiji T."/>
            <person name="Kobatake N."/>
            <person name="Inagaki H."/>
            <person name="Ikema Y."/>
            <person name="Okamoto S."/>
            <person name="Okitani R."/>
            <person name="Kawakami T."/>
            <person name="Noguchi S."/>
            <person name="Itoh T."/>
            <person name="Shigeta K."/>
            <person name="Senba T."/>
            <person name="Matsumura K."/>
            <person name="Nakajima Y."/>
            <person name="Mizuno T."/>
            <person name="Morinaga M."/>
            <person name="Sasaki M."/>
            <person name="Togashi T."/>
            <person name="Oyama M."/>
            <person name="Hata H."/>
            <person name="Watanabe M."/>
            <person name="Komatsu T."/>
            <person name="Mizushima-Sugano J."/>
            <person name="Satoh T."/>
            <person name="Shirai Y."/>
            <person name="Takahashi Y."/>
            <person name="Nakagawa K."/>
            <person name="Okumura K."/>
            <person name="Nagase T."/>
            <person name="Nomura N."/>
            <person name="Kikuchi H."/>
            <person name="Masuho Y."/>
            <person name="Yamashita R."/>
            <person name="Nakai K."/>
            <person name="Yada T."/>
            <person name="Nakamura Y."/>
            <person name="Ohara O."/>
            <person name="Isogai T."/>
            <person name="Sugano S."/>
        </authorList>
    </citation>
    <scope>NUCLEOTIDE SEQUENCE [LARGE SCALE MRNA]</scope>
    <scope>VARIANTS LEU-13 AND VAL-192</scope>
    <source>
        <tissue>Esophagus</tissue>
    </source>
</reference>
<reference key="4">
    <citation type="journal article" date="2006" name="Nature">
        <title>The DNA sequence and biological annotation of human chromosome 1.</title>
        <authorList>
            <person name="Gregory S.G."/>
            <person name="Barlow K.F."/>
            <person name="McLay K.E."/>
            <person name="Kaul R."/>
            <person name="Swarbreck D."/>
            <person name="Dunham A."/>
            <person name="Scott C.E."/>
            <person name="Howe K.L."/>
            <person name="Woodfine K."/>
            <person name="Spencer C.C.A."/>
            <person name="Jones M.C."/>
            <person name="Gillson C."/>
            <person name="Searle S."/>
            <person name="Zhou Y."/>
            <person name="Kokocinski F."/>
            <person name="McDonald L."/>
            <person name="Evans R."/>
            <person name="Phillips K."/>
            <person name="Atkinson A."/>
            <person name="Cooper R."/>
            <person name="Jones C."/>
            <person name="Hall R.E."/>
            <person name="Andrews T.D."/>
            <person name="Lloyd C."/>
            <person name="Ainscough R."/>
            <person name="Almeida J.P."/>
            <person name="Ambrose K.D."/>
            <person name="Anderson F."/>
            <person name="Andrew R.W."/>
            <person name="Ashwell R.I.S."/>
            <person name="Aubin K."/>
            <person name="Babbage A.K."/>
            <person name="Bagguley C.L."/>
            <person name="Bailey J."/>
            <person name="Beasley H."/>
            <person name="Bethel G."/>
            <person name="Bird C.P."/>
            <person name="Bray-Allen S."/>
            <person name="Brown J.Y."/>
            <person name="Brown A.J."/>
            <person name="Buckley D."/>
            <person name="Burton J."/>
            <person name="Bye J."/>
            <person name="Carder C."/>
            <person name="Chapman J.C."/>
            <person name="Clark S.Y."/>
            <person name="Clarke G."/>
            <person name="Clee C."/>
            <person name="Cobley V."/>
            <person name="Collier R.E."/>
            <person name="Corby N."/>
            <person name="Coville G.J."/>
            <person name="Davies J."/>
            <person name="Deadman R."/>
            <person name="Dunn M."/>
            <person name="Earthrowl M."/>
            <person name="Ellington A.G."/>
            <person name="Errington H."/>
            <person name="Frankish A."/>
            <person name="Frankland J."/>
            <person name="French L."/>
            <person name="Garner P."/>
            <person name="Garnett J."/>
            <person name="Gay L."/>
            <person name="Ghori M.R.J."/>
            <person name="Gibson R."/>
            <person name="Gilby L.M."/>
            <person name="Gillett W."/>
            <person name="Glithero R.J."/>
            <person name="Grafham D.V."/>
            <person name="Griffiths C."/>
            <person name="Griffiths-Jones S."/>
            <person name="Grocock R."/>
            <person name="Hammond S."/>
            <person name="Harrison E.S.I."/>
            <person name="Hart E."/>
            <person name="Haugen E."/>
            <person name="Heath P.D."/>
            <person name="Holmes S."/>
            <person name="Holt K."/>
            <person name="Howden P.J."/>
            <person name="Hunt A.R."/>
            <person name="Hunt S.E."/>
            <person name="Hunter G."/>
            <person name="Isherwood J."/>
            <person name="James R."/>
            <person name="Johnson C."/>
            <person name="Johnson D."/>
            <person name="Joy A."/>
            <person name="Kay M."/>
            <person name="Kershaw J.K."/>
            <person name="Kibukawa M."/>
            <person name="Kimberley A.M."/>
            <person name="King A."/>
            <person name="Knights A.J."/>
            <person name="Lad H."/>
            <person name="Laird G."/>
            <person name="Lawlor S."/>
            <person name="Leongamornlert D.A."/>
            <person name="Lloyd D.M."/>
            <person name="Loveland J."/>
            <person name="Lovell J."/>
            <person name="Lush M.J."/>
            <person name="Lyne R."/>
            <person name="Martin S."/>
            <person name="Mashreghi-Mohammadi M."/>
            <person name="Matthews L."/>
            <person name="Matthews N.S.W."/>
            <person name="McLaren S."/>
            <person name="Milne S."/>
            <person name="Mistry S."/>
            <person name="Moore M.J.F."/>
            <person name="Nickerson T."/>
            <person name="O'Dell C.N."/>
            <person name="Oliver K."/>
            <person name="Palmeiri A."/>
            <person name="Palmer S.A."/>
            <person name="Parker A."/>
            <person name="Patel D."/>
            <person name="Pearce A.V."/>
            <person name="Peck A.I."/>
            <person name="Pelan S."/>
            <person name="Phelps K."/>
            <person name="Phillimore B.J."/>
            <person name="Plumb R."/>
            <person name="Rajan J."/>
            <person name="Raymond C."/>
            <person name="Rouse G."/>
            <person name="Saenphimmachak C."/>
            <person name="Sehra H.K."/>
            <person name="Sheridan E."/>
            <person name="Shownkeen R."/>
            <person name="Sims S."/>
            <person name="Skuce C.D."/>
            <person name="Smith M."/>
            <person name="Steward C."/>
            <person name="Subramanian S."/>
            <person name="Sycamore N."/>
            <person name="Tracey A."/>
            <person name="Tromans A."/>
            <person name="Van Helmond Z."/>
            <person name="Wall M."/>
            <person name="Wallis J.M."/>
            <person name="White S."/>
            <person name="Whitehead S.L."/>
            <person name="Wilkinson J.E."/>
            <person name="Willey D.L."/>
            <person name="Williams H."/>
            <person name="Wilming L."/>
            <person name="Wray P.W."/>
            <person name="Wu Z."/>
            <person name="Coulson A."/>
            <person name="Vaudin M."/>
            <person name="Sulston J.E."/>
            <person name="Durbin R.M."/>
            <person name="Hubbard T."/>
            <person name="Wooster R."/>
            <person name="Dunham I."/>
            <person name="Carter N.P."/>
            <person name="McVean G."/>
            <person name="Ross M.T."/>
            <person name="Harrow J."/>
            <person name="Olson M.V."/>
            <person name="Beck S."/>
            <person name="Rogers J."/>
            <person name="Bentley D.R."/>
        </authorList>
    </citation>
    <scope>NUCLEOTIDE SEQUENCE [LARGE SCALE GENOMIC DNA]</scope>
</reference>
<reference key="5">
    <citation type="journal article" date="2004" name="Genome Res.">
        <title>The status, quality, and expansion of the NIH full-length cDNA project: the Mammalian Gene Collection (MGC).</title>
        <authorList>
            <consortium name="The MGC Project Team"/>
        </authorList>
    </citation>
    <scope>NUCLEOTIDE SEQUENCE [LARGE SCALE MRNA] (ISOFORM 1)</scope>
    <scope>VARIANTS LEU-3; LEU-13; VAL-192 AND ILE-213</scope>
</reference>
<reference key="6">
    <citation type="journal article" date="2006" name="J. Biol. Chem.">
        <title>Peptidoglycan recognition proteins are a new class of human bactericidal proteins.</title>
        <authorList>
            <person name="Lu X."/>
            <person name="Wang M."/>
            <person name="Qi J."/>
            <person name="Wang H."/>
            <person name="Li X."/>
            <person name="Gupta D."/>
            <person name="Dziarski R."/>
        </authorList>
    </citation>
    <scope>FUNCTION</scope>
    <scope>SUBUNIT</scope>
    <scope>GLYCOSYLATION</scope>
    <scope>INDUCTION</scope>
    <scope>SUBCELLULAR LOCATION</scope>
    <scope>TISSUE SPECIFICITY</scope>
</reference>
<reference key="7">
    <citation type="journal article" date="2007" name="Proc. Natl. Acad. Sci. U.S.A.">
        <title>Structural insights into the bactericidal mechanism of human peptidoglycan recognition proteins.</title>
        <authorList>
            <person name="Cho S."/>
            <person name="Wang Q."/>
            <person name="Swaminathan C.P."/>
            <person name="Hesek D."/>
            <person name="Lee M."/>
            <person name="Boons G.-J."/>
            <person name="Mobashery S."/>
            <person name="Mariuzza R.A."/>
        </authorList>
    </citation>
    <scope>X-RAY CRYSTALLOGRAPHY (2.1 ANGSTROMS) OF 210-373 IN COMPLEX WITH PEPTIDOGLYCAN-PEPTIDE</scope>
    <scope>SUBUNIT</scope>
    <scope>DISULFIDE BONDS</scope>
</reference>
<proteinExistence type="evidence at protein level"/>
<evidence type="ECO:0000255" key="1"/>
<evidence type="ECO:0000269" key="2">
    <source>
    </source>
</evidence>
<evidence type="ECO:0000269" key="3">
    <source>
    </source>
</evidence>
<evidence type="ECO:0000269" key="4">
    <source>
    </source>
</evidence>
<evidence type="ECO:0000269" key="5">
    <source>
    </source>
</evidence>
<evidence type="ECO:0000269" key="6">
    <source>
    </source>
</evidence>
<evidence type="ECO:0000269" key="7">
    <source ref="2"/>
</evidence>
<evidence type="ECO:0000303" key="8">
    <source ref="2"/>
</evidence>
<evidence type="ECO:0000305" key="9"/>
<evidence type="ECO:0007829" key="10">
    <source>
        <dbReference type="PDB" id="2EAX"/>
    </source>
</evidence>